<reference key="1">
    <citation type="journal article" date="2003" name="Lancet">
        <title>Genome sequence of Vibrio parahaemolyticus: a pathogenic mechanism distinct from that of V. cholerae.</title>
        <authorList>
            <person name="Makino K."/>
            <person name="Oshima K."/>
            <person name="Kurokawa K."/>
            <person name="Yokoyama K."/>
            <person name="Uda T."/>
            <person name="Tagomori K."/>
            <person name="Iijima Y."/>
            <person name="Najima M."/>
            <person name="Nakano M."/>
            <person name="Yamashita A."/>
            <person name="Kubota Y."/>
            <person name="Kimura S."/>
            <person name="Yasunaga T."/>
            <person name="Honda T."/>
            <person name="Shinagawa H."/>
            <person name="Hattori M."/>
            <person name="Iida T."/>
        </authorList>
    </citation>
    <scope>NUCLEOTIDE SEQUENCE [LARGE SCALE GENOMIC DNA]</scope>
    <source>
        <strain>RIMD 2210633</strain>
    </source>
</reference>
<gene>
    <name evidence="1" type="primary">gpt</name>
    <name type="ordered locus">VP0673</name>
</gene>
<comment type="function">
    <text evidence="1">Purine salvage pathway enzyme that catalyzes the transfer of the ribosyl-5-phosphate group from 5-phospho-alpha-D-ribose 1-diphosphate (PRPP) to the N9 position of the 6-oxopurines guanine and xanthine to form the corresponding ribonucleotides GMP (guanosine 5'-monophosphate) and XMP (xanthosine 5'-monophosphate), with the release of PPi. To a lesser extent, also acts on hypoxanthine.</text>
</comment>
<comment type="catalytic activity">
    <reaction evidence="1">
        <text>GMP + diphosphate = guanine + 5-phospho-alpha-D-ribose 1-diphosphate</text>
        <dbReference type="Rhea" id="RHEA:25424"/>
        <dbReference type="ChEBI" id="CHEBI:16235"/>
        <dbReference type="ChEBI" id="CHEBI:33019"/>
        <dbReference type="ChEBI" id="CHEBI:58017"/>
        <dbReference type="ChEBI" id="CHEBI:58115"/>
    </reaction>
    <physiologicalReaction direction="right-to-left" evidence="1">
        <dbReference type="Rhea" id="RHEA:25426"/>
    </physiologicalReaction>
</comment>
<comment type="catalytic activity">
    <reaction evidence="1">
        <text>XMP + diphosphate = xanthine + 5-phospho-alpha-D-ribose 1-diphosphate</text>
        <dbReference type="Rhea" id="RHEA:10800"/>
        <dbReference type="ChEBI" id="CHEBI:17712"/>
        <dbReference type="ChEBI" id="CHEBI:33019"/>
        <dbReference type="ChEBI" id="CHEBI:57464"/>
        <dbReference type="ChEBI" id="CHEBI:58017"/>
        <dbReference type="EC" id="2.4.2.22"/>
    </reaction>
    <physiologicalReaction direction="right-to-left" evidence="1">
        <dbReference type="Rhea" id="RHEA:10802"/>
    </physiologicalReaction>
</comment>
<comment type="catalytic activity">
    <reaction evidence="1">
        <text>IMP + diphosphate = hypoxanthine + 5-phospho-alpha-D-ribose 1-diphosphate</text>
        <dbReference type="Rhea" id="RHEA:17973"/>
        <dbReference type="ChEBI" id="CHEBI:17368"/>
        <dbReference type="ChEBI" id="CHEBI:33019"/>
        <dbReference type="ChEBI" id="CHEBI:58017"/>
        <dbReference type="ChEBI" id="CHEBI:58053"/>
    </reaction>
    <physiologicalReaction direction="right-to-left" evidence="1">
        <dbReference type="Rhea" id="RHEA:17975"/>
    </physiologicalReaction>
</comment>
<comment type="cofactor">
    <cofactor evidence="1">
        <name>Mg(2+)</name>
        <dbReference type="ChEBI" id="CHEBI:18420"/>
    </cofactor>
</comment>
<comment type="pathway">
    <text evidence="1">Purine metabolism; GMP biosynthesis via salvage pathway; GMP from guanine: step 1/1.</text>
</comment>
<comment type="pathway">
    <text evidence="1">Purine metabolism; XMP biosynthesis via salvage pathway; XMP from xanthine: step 1/1.</text>
</comment>
<comment type="subunit">
    <text evidence="1">Homotetramer.</text>
</comment>
<comment type="subcellular location">
    <subcellularLocation>
        <location evidence="1">Cell inner membrane</location>
        <topology evidence="1">Peripheral membrane protein</topology>
    </subcellularLocation>
</comment>
<comment type="similarity">
    <text evidence="1">Belongs to the purine/pyrimidine phosphoribosyltransferase family. XGPT subfamily.</text>
</comment>
<name>XGPT_VIBPA</name>
<keyword id="KW-0997">Cell inner membrane</keyword>
<keyword id="KW-1003">Cell membrane</keyword>
<keyword id="KW-0328">Glycosyltransferase</keyword>
<keyword id="KW-0460">Magnesium</keyword>
<keyword id="KW-0472">Membrane</keyword>
<keyword id="KW-0479">Metal-binding</keyword>
<keyword id="KW-0660">Purine salvage</keyword>
<keyword id="KW-0808">Transferase</keyword>
<protein>
    <recommendedName>
        <fullName evidence="1">Xanthine-guanine phosphoribosyltransferase</fullName>
        <shortName evidence="1">XGPRT</shortName>
        <ecNumber evidence="1">2.4.2.-</ecNumber>
        <ecNumber evidence="1">2.4.2.22</ecNumber>
    </recommendedName>
    <alternativeName>
        <fullName evidence="1">Xanthine phosphoribosyltransferase</fullName>
    </alternativeName>
</protein>
<accession>Q87RV3</accession>
<organism>
    <name type="scientific">Vibrio parahaemolyticus serotype O3:K6 (strain RIMD 2210633)</name>
    <dbReference type="NCBI Taxonomy" id="223926"/>
    <lineage>
        <taxon>Bacteria</taxon>
        <taxon>Pseudomonadati</taxon>
        <taxon>Pseudomonadota</taxon>
        <taxon>Gammaproteobacteria</taxon>
        <taxon>Vibrionales</taxon>
        <taxon>Vibrionaceae</taxon>
        <taxon>Vibrio</taxon>
    </lineage>
</organism>
<dbReference type="EC" id="2.4.2.-" evidence="1"/>
<dbReference type="EC" id="2.4.2.22" evidence="1"/>
<dbReference type="EMBL" id="BA000031">
    <property type="protein sequence ID" value="BAC58936.1"/>
    <property type="molecule type" value="Genomic_DNA"/>
</dbReference>
<dbReference type="RefSeq" id="NP_797052.1">
    <property type="nucleotide sequence ID" value="NC_004603.1"/>
</dbReference>
<dbReference type="SMR" id="Q87RV3"/>
<dbReference type="KEGG" id="vpa:VP0673"/>
<dbReference type="PATRIC" id="fig|223926.6.peg.641"/>
<dbReference type="eggNOG" id="COG2236">
    <property type="taxonomic scope" value="Bacteria"/>
</dbReference>
<dbReference type="HOGENOM" id="CLU_080904_3_0_6"/>
<dbReference type="UniPathway" id="UPA00602">
    <property type="reaction ID" value="UER00658"/>
</dbReference>
<dbReference type="UniPathway" id="UPA00909">
    <property type="reaction ID" value="UER00887"/>
</dbReference>
<dbReference type="Proteomes" id="UP000002493">
    <property type="component" value="Chromosome 1"/>
</dbReference>
<dbReference type="GO" id="GO:0005829">
    <property type="term" value="C:cytosol"/>
    <property type="evidence" value="ECO:0007669"/>
    <property type="project" value="TreeGrafter"/>
</dbReference>
<dbReference type="GO" id="GO:0005886">
    <property type="term" value="C:plasma membrane"/>
    <property type="evidence" value="ECO:0007669"/>
    <property type="project" value="UniProtKB-SubCell"/>
</dbReference>
<dbReference type="GO" id="GO:0052657">
    <property type="term" value="F:guanine phosphoribosyltransferase activity"/>
    <property type="evidence" value="ECO:0007669"/>
    <property type="project" value="RHEA"/>
</dbReference>
<dbReference type="GO" id="GO:0004422">
    <property type="term" value="F:hypoxanthine phosphoribosyltransferase activity"/>
    <property type="evidence" value="ECO:0007669"/>
    <property type="project" value="TreeGrafter"/>
</dbReference>
<dbReference type="GO" id="GO:0000287">
    <property type="term" value="F:magnesium ion binding"/>
    <property type="evidence" value="ECO:0007669"/>
    <property type="project" value="UniProtKB-UniRule"/>
</dbReference>
<dbReference type="GO" id="GO:0000310">
    <property type="term" value="F:xanthine phosphoribosyltransferase activity"/>
    <property type="evidence" value="ECO:0007669"/>
    <property type="project" value="UniProtKB-UniRule"/>
</dbReference>
<dbReference type="GO" id="GO:0032263">
    <property type="term" value="P:GMP salvage"/>
    <property type="evidence" value="ECO:0007669"/>
    <property type="project" value="UniProtKB-UniRule"/>
</dbReference>
<dbReference type="GO" id="GO:0032264">
    <property type="term" value="P:IMP salvage"/>
    <property type="evidence" value="ECO:0007669"/>
    <property type="project" value="TreeGrafter"/>
</dbReference>
<dbReference type="GO" id="GO:0006166">
    <property type="term" value="P:purine ribonucleoside salvage"/>
    <property type="evidence" value="ECO:0007669"/>
    <property type="project" value="UniProtKB-KW"/>
</dbReference>
<dbReference type="GO" id="GO:0032265">
    <property type="term" value="P:XMP salvage"/>
    <property type="evidence" value="ECO:0007669"/>
    <property type="project" value="UniProtKB-UniRule"/>
</dbReference>
<dbReference type="CDD" id="cd06223">
    <property type="entry name" value="PRTases_typeI"/>
    <property type="match status" value="1"/>
</dbReference>
<dbReference type="Gene3D" id="3.40.50.2020">
    <property type="match status" value="1"/>
</dbReference>
<dbReference type="HAMAP" id="MF_01903">
    <property type="entry name" value="XGPRT"/>
    <property type="match status" value="1"/>
</dbReference>
<dbReference type="InterPro" id="IPR000836">
    <property type="entry name" value="PRibTrfase_dom"/>
</dbReference>
<dbReference type="InterPro" id="IPR029057">
    <property type="entry name" value="PRTase-like"/>
</dbReference>
<dbReference type="InterPro" id="IPR023747">
    <property type="entry name" value="Xanthine_Guanine_PRibTrfase"/>
</dbReference>
<dbReference type="NCBIfam" id="NF006613">
    <property type="entry name" value="PRK09177.1"/>
    <property type="match status" value="1"/>
</dbReference>
<dbReference type="NCBIfam" id="NF000014">
    <property type="entry name" value="tet_prtrans_34"/>
    <property type="match status" value="1"/>
</dbReference>
<dbReference type="PANTHER" id="PTHR39563">
    <property type="entry name" value="XANTHINE PHOSPHORIBOSYLTRANSFERASE"/>
    <property type="match status" value="1"/>
</dbReference>
<dbReference type="PANTHER" id="PTHR39563:SF1">
    <property type="entry name" value="XANTHINE-GUANINE PHOSPHORIBOSYLTRANSFERASE"/>
    <property type="match status" value="1"/>
</dbReference>
<dbReference type="Pfam" id="PF00156">
    <property type="entry name" value="Pribosyltran"/>
    <property type="match status" value="1"/>
</dbReference>
<dbReference type="SUPFAM" id="SSF53271">
    <property type="entry name" value="PRTase-like"/>
    <property type="match status" value="1"/>
</dbReference>
<dbReference type="PROSITE" id="PS00103">
    <property type="entry name" value="PUR_PYR_PR_TRANSFER"/>
    <property type="match status" value="1"/>
</dbReference>
<feature type="chain" id="PRO_0000139692" description="Xanthine-guanine phosphoribosyltransferase">
    <location>
        <begin position="1"/>
        <end position="154"/>
    </location>
</feature>
<feature type="binding site" evidence="1">
    <location>
        <begin position="37"/>
        <end position="38"/>
    </location>
    <ligand>
        <name>5-phospho-alpha-D-ribose 1-diphosphate</name>
        <dbReference type="ChEBI" id="CHEBI:58017"/>
    </ligand>
</feature>
<feature type="binding site" evidence="1">
    <location>
        <position position="69"/>
    </location>
    <ligand>
        <name>5-phospho-alpha-D-ribose 1-diphosphate</name>
        <dbReference type="ChEBI" id="CHEBI:58017"/>
    </ligand>
</feature>
<feature type="binding site" evidence="1">
    <location>
        <position position="69"/>
    </location>
    <ligand>
        <name>GMP</name>
        <dbReference type="ChEBI" id="CHEBI:58115"/>
    </ligand>
</feature>
<feature type="binding site" evidence="1">
    <location>
        <begin position="88"/>
        <end position="96"/>
    </location>
    <ligand>
        <name>5-phospho-alpha-D-ribose 1-diphosphate</name>
        <dbReference type="ChEBI" id="CHEBI:58017"/>
    </ligand>
</feature>
<feature type="binding site" evidence="1">
    <location>
        <position position="89"/>
    </location>
    <ligand>
        <name>Mg(2+)</name>
        <dbReference type="ChEBI" id="CHEBI:18420"/>
    </ligand>
</feature>
<feature type="binding site" evidence="1">
    <location>
        <begin position="92"/>
        <end position="96"/>
    </location>
    <ligand>
        <name>GMP</name>
        <dbReference type="ChEBI" id="CHEBI:58115"/>
    </ligand>
</feature>
<feature type="binding site" evidence="1">
    <location>
        <position position="92"/>
    </location>
    <ligand>
        <name>guanine</name>
        <dbReference type="ChEBI" id="CHEBI:16235"/>
    </ligand>
</feature>
<feature type="binding site" evidence="1">
    <location>
        <position position="92"/>
    </location>
    <ligand>
        <name>xanthine</name>
        <dbReference type="ChEBI" id="CHEBI:17712"/>
    </ligand>
</feature>
<feature type="binding site" evidence="1">
    <location>
        <begin position="134"/>
        <end position="135"/>
    </location>
    <ligand>
        <name>GMP</name>
        <dbReference type="ChEBI" id="CHEBI:58115"/>
    </ligand>
</feature>
<feature type="binding site" evidence="1">
    <location>
        <position position="135"/>
    </location>
    <ligand>
        <name>guanine</name>
        <dbReference type="ChEBI" id="CHEBI:16235"/>
    </ligand>
</feature>
<feature type="binding site" evidence="1">
    <location>
        <position position="135"/>
    </location>
    <ligand>
        <name>xanthine</name>
        <dbReference type="ChEBI" id="CHEBI:17712"/>
    </ligand>
</feature>
<sequence length="154" mass="17570">MSKKFIITWDAMQTYCRELAEKQMPAEQWKGIWAVSRGGLVPGAILARELGIRYVDTICISSYDHDHQRDMTVLKAPEGDGEGYLIVEDLVDSGDTARKLREMYPKAKMIAVCAKPSGKELLDDYVVDIAQDTWIEQPWDMSIQYAEPVNRKQK</sequence>
<evidence type="ECO:0000255" key="1">
    <source>
        <dbReference type="HAMAP-Rule" id="MF_01903"/>
    </source>
</evidence>
<proteinExistence type="inferred from homology"/>